<keyword id="KW-0378">Hydrolase</keyword>
<keyword id="KW-0460">Magnesium</keyword>
<keyword id="KW-1185">Reference proteome</keyword>
<protein>
    <recommendedName>
        <fullName evidence="2">Deoxyguanosinetriphosphate triphosphohydrolase</fullName>
        <shortName evidence="2">dGTP triphosphohydrolase</shortName>
        <shortName evidence="2">dGTPase</shortName>
        <ecNumber evidence="2">3.1.5.1</ecNumber>
    </recommendedName>
</protein>
<gene>
    <name evidence="2" type="primary">dgt</name>
    <name type="ordered locus">Z0171</name>
    <name type="ordered locus">ECs0164</name>
</gene>
<evidence type="ECO:0000250" key="1"/>
<evidence type="ECO:0000255" key="2">
    <source>
        <dbReference type="HAMAP-Rule" id="MF_00030"/>
    </source>
</evidence>
<evidence type="ECO:0000255" key="3">
    <source>
        <dbReference type="PROSITE-ProRule" id="PRU01175"/>
    </source>
</evidence>
<accession>Q8X8Y9</accession>
<organism>
    <name type="scientific">Escherichia coli O157:H7</name>
    <dbReference type="NCBI Taxonomy" id="83334"/>
    <lineage>
        <taxon>Bacteria</taxon>
        <taxon>Pseudomonadati</taxon>
        <taxon>Pseudomonadota</taxon>
        <taxon>Gammaproteobacteria</taxon>
        <taxon>Enterobacterales</taxon>
        <taxon>Enterobacteriaceae</taxon>
        <taxon>Escherichia</taxon>
    </lineage>
</organism>
<dbReference type="EC" id="3.1.5.1" evidence="2"/>
<dbReference type="EMBL" id="AE005174">
    <property type="protein sequence ID" value="AAG54464.1"/>
    <property type="molecule type" value="Genomic_DNA"/>
</dbReference>
<dbReference type="EMBL" id="BA000007">
    <property type="protein sequence ID" value="BAB33587.1"/>
    <property type="molecule type" value="Genomic_DNA"/>
</dbReference>
<dbReference type="PIR" id="D85500">
    <property type="entry name" value="D85500"/>
</dbReference>
<dbReference type="PIR" id="D90649">
    <property type="entry name" value="D90649"/>
</dbReference>
<dbReference type="RefSeq" id="NP_308191.1">
    <property type="nucleotide sequence ID" value="NC_002695.1"/>
</dbReference>
<dbReference type="RefSeq" id="WP_000057080.1">
    <property type="nucleotide sequence ID" value="NZ_VOAI01000002.1"/>
</dbReference>
<dbReference type="SMR" id="Q8X8Y9"/>
<dbReference type="STRING" id="155864.Z0171"/>
<dbReference type="GeneID" id="913819"/>
<dbReference type="KEGG" id="ece:Z0171"/>
<dbReference type="KEGG" id="ecs:ECs_0164"/>
<dbReference type="PATRIC" id="fig|386585.9.peg.264"/>
<dbReference type="eggNOG" id="COG0232">
    <property type="taxonomic scope" value="Bacteria"/>
</dbReference>
<dbReference type="HOGENOM" id="CLU_028163_2_1_6"/>
<dbReference type="OMA" id="ICYTIID"/>
<dbReference type="Proteomes" id="UP000000558">
    <property type="component" value="Chromosome"/>
</dbReference>
<dbReference type="Proteomes" id="UP000002519">
    <property type="component" value="Chromosome"/>
</dbReference>
<dbReference type="GO" id="GO:0008832">
    <property type="term" value="F:dGTPase activity"/>
    <property type="evidence" value="ECO:0007669"/>
    <property type="project" value="UniProtKB-UniRule"/>
</dbReference>
<dbReference type="GO" id="GO:0000287">
    <property type="term" value="F:magnesium ion binding"/>
    <property type="evidence" value="ECO:0007669"/>
    <property type="project" value="UniProtKB-UniRule"/>
</dbReference>
<dbReference type="GO" id="GO:0006203">
    <property type="term" value="P:dGTP catabolic process"/>
    <property type="evidence" value="ECO:0007669"/>
    <property type="project" value="InterPro"/>
</dbReference>
<dbReference type="CDD" id="cd00077">
    <property type="entry name" value="HDc"/>
    <property type="match status" value="1"/>
</dbReference>
<dbReference type="FunFam" id="1.10.3210.10:FF:000009">
    <property type="entry name" value="Deoxyguanosinetriphosphate triphosphohydrolase"/>
    <property type="match status" value="1"/>
</dbReference>
<dbReference type="FunFam" id="1.10.3210.10:FF:000010">
    <property type="entry name" value="Deoxyguanosinetriphosphate triphosphohydrolase"/>
    <property type="match status" value="1"/>
</dbReference>
<dbReference type="FunFam" id="1.10.3410.10:FF:000001">
    <property type="entry name" value="Deoxyguanosinetriphosphate triphosphohydrolase"/>
    <property type="match status" value="1"/>
</dbReference>
<dbReference type="Gene3D" id="1.10.3210.10">
    <property type="entry name" value="Hypothetical protein af1432"/>
    <property type="match status" value="2"/>
</dbReference>
<dbReference type="Gene3D" id="1.10.3410.10">
    <property type="entry name" value="putative deoxyguanosinetriphosphate triphosphohydrolase like domain"/>
    <property type="match status" value="1"/>
</dbReference>
<dbReference type="HAMAP" id="MF_00030">
    <property type="entry name" value="dGTPase_type1"/>
    <property type="match status" value="1"/>
</dbReference>
<dbReference type="InterPro" id="IPR023293">
    <property type="entry name" value="dGTP_triP_hydro_central_sf"/>
</dbReference>
<dbReference type="InterPro" id="IPR006261">
    <property type="entry name" value="dGTPase"/>
</dbReference>
<dbReference type="InterPro" id="IPR050135">
    <property type="entry name" value="dGTPase-like"/>
</dbReference>
<dbReference type="InterPro" id="IPR020779">
    <property type="entry name" value="dNTPase_1"/>
</dbReference>
<dbReference type="InterPro" id="IPR003607">
    <property type="entry name" value="HD/PDEase_dom"/>
</dbReference>
<dbReference type="InterPro" id="IPR006674">
    <property type="entry name" value="HD_domain"/>
</dbReference>
<dbReference type="NCBIfam" id="TIGR01353">
    <property type="entry name" value="dGTP_triPase"/>
    <property type="match status" value="1"/>
</dbReference>
<dbReference type="NCBIfam" id="NF003429">
    <property type="entry name" value="PRK04926.1"/>
    <property type="match status" value="1"/>
</dbReference>
<dbReference type="PANTHER" id="PTHR11373:SF32">
    <property type="entry name" value="DEOXYGUANOSINETRIPHOSPHATE TRIPHOSPHOHYDROLASE"/>
    <property type="match status" value="1"/>
</dbReference>
<dbReference type="PANTHER" id="PTHR11373">
    <property type="entry name" value="DEOXYNUCLEOSIDE TRIPHOSPHATE TRIPHOSPHOHYDROLASE"/>
    <property type="match status" value="1"/>
</dbReference>
<dbReference type="Pfam" id="PF01966">
    <property type="entry name" value="HD"/>
    <property type="match status" value="1"/>
</dbReference>
<dbReference type="SMART" id="SM00471">
    <property type="entry name" value="HDc"/>
    <property type="match status" value="1"/>
</dbReference>
<dbReference type="SUPFAM" id="SSF109604">
    <property type="entry name" value="HD-domain/PDEase-like"/>
    <property type="match status" value="1"/>
</dbReference>
<dbReference type="PROSITE" id="PS51831">
    <property type="entry name" value="HD"/>
    <property type="match status" value="1"/>
</dbReference>
<comment type="function">
    <text evidence="2">dGTPase preferentially hydrolyzes dGTP over the other canonical NTPs.</text>
</comment>
<comment type="catalytic activity">
    <reaction evidence="2">
        <text>dGTP + H2O = 2'-deoxyguanosine + triphosphate + H(+)</text>
        <dbReference type="Rhea" id="RHEA:15193"/>
        <dbReference type="ChEBI" id="CHEBI:15377"/>
        <dbReference type="ChEBI" id="CHEBI:15378"/>
        <dbReference type="ChEBI" id="CHEBI:17172"/>
        <dbReference type="ChEBI" id="CHEBI:18036"/>
        <dbReference type="ChEBI" id="CHEBI:61429"/>
        <dbReference type="EC" id="3.1.5.1"/>
    </reaction>
</comment>
<comment type="cofactor">
    <cofactor evidence="2">
        <name>Mg(2+)</name>
        <dbReference type="ChEBI" id="CHEBI:18420"/>
    </cofactor>
</comment>
<comment type="subunit">
    <text evidence="2">Homotetramer.</text>
</comment>
<comment type="similarity">
    <text evidence="2">Belongs to the dGTPase family. Type 1 subfamily.</text>
</comment>
<name>DGTP_ECO57</name>
<sequence>MAQIDFRKKINWHRRYRSPQGVKTEHEILRIFESDRGRIINSPAIRRLQQKTQVFPLERNAAVRTRLTHSMEVQQVGRYIAKEILSRLKELKLLEAYGLDELTGPFESIVEMSCLMHDIGNPPFGHFGEAAINDWFRQRLHPEDAESQPLTDDRCSVAVLRLRDGEEPLNELRRKIRQDLCHFEGNAQGIRLVHTLMRMNLTWAQVGGILKYTRPAWWRGETPETHHYLMKKPGYYLSEEAYIARLRKELNLALYSRFPLTWIMEAADDISYCVADLEDAVEKRIFTVEQLYHHLHEAWGQHEKGSLFSLVVENAWEKSRSNSLSRSTEDQFFMYLRVNTLNKLVPYAAQRFIDNLPAIFAGTFNHALLEDASECSDLLKLYKNVAVKHVFSHPDVEQLELQGYRVISGLLEIYRPLLSLSLSDFTELVEKERVKRSPIESRLFHKLSTRHRLAYVEAVSKLPSDSPEFPLWEYYYRCRLLQDYISGMTDLYAWDEYRRLMAVEQ</sequence>
<reference key="1">
    <citation type="journal article" date="2001" name="Nature">
        <title>Genome sequence of enterohaemorrhagic Escherichia coli O157:H7.</title>
        <authorList>
            <person name="Perna N.T."/>
            <person name="Plunkett G. III"/>
            <person name="Burland V."/>
            <person name="Mau B."/>
            <person name="Glasner J.D."/>
            <person name="Rose D.J."/>
            <person name="Mayhew G.F."/>
            <person name="Evans P.S."/>
            <person name="Gregor J."/>
            <person name="Kirkpatrick H.A."/>
            <person name="Posfai G."/>
            <person name="Hackett J."/>
            <person name="Klink S."/>
            <person name="Boutin A."/>
            <person name="Shao Y."/>
            <person name="Miller L."/>
            <person name="Grotbeck E.J."/>
            <person name="Davis N.W."/>
            <person name="Lim A."/>
            <person name="Dimalanta E.T."/>
            <person name="Potamousis K."/>
            <person name="Apodaca J."/>
            <person name="Anantharaman T.S."/>
            <person name="Lin J."/>
            <person name="Yen G."/>
            <person name="Schwartz D.C."/>
            <person name="Welch R.A."/>
            <person name="Blattner F.R."/>
        </authorList>
    </citation>
    <scope>NUCLEOTIDE SEQUENCE [LARGE SCALE GENOMIC DNA]</scope>
    <source>
        <strain>O157:H7 / EDL933 / ATCC 700927 / EHEC</strain>
    </source>
</reference>
<reference key="2">
    <citation type="journal article" date="2001" name="DNA Res.">
        <title>Complete genome sequence of enterohemorrhagic Escherichia coli O157:H7 and genomic comparison with a laboratory strain K-12.</title>
        <authorList>
            <person name="Hayashi T."/>
            <person name="Makino K."/>
            <person name="Ohnishi M."/>
            <person name="Kurokawa K."/>
            <person name="Ishii K."/>
            <person name="Yokoyama K."/>
            <person name="Han C.-G."/>
            <person name="Ohtsubo E."/>
            <person name="Nakayama K."/>
            <person name="Murata T."/>
            <person name="Tanaka M."/>
            <person name="Tobe T."/>
            <person name="Iida T."/>
            <person name="Takami H."/>
            <person name="Honda T."/>
            <person name="Sasakawa C."/>
            <person name="Ogasawara N."/>
            <person name="Yasunaga T."/>
            <person name="Kuhara S."/>
            <person name="Shiba T."/>
            <person name="Hattori M."/>
            <person name="Shinagawa H."/>
        </authorList>
    </citation>
    <scope>NUCLEOTIDE SEQUENCE [LARGE SCALE GENOMIC DNA]</scope>
    <source>
        <strain>O157:H7 / Sakai / RIMD 0509952 / EHEC</strain>
    </source>
</reference>
<feature type="initiator methionine" description="Removed" evidence="1">
    <location>
        <position position="1"/>
    </location>
</feature>
<feature type="chain" id="PRO_0000205281" description="Deoxyguanosinetriphosphate triphosphohydrolase">
    <location>
        <begin position="2"/>
        <end position="505"/>
    </location>
</feature>
<feature type="domain" description="HD" evidence="3">
    <location>
        <begin position="66"/>
        <end position="273"/>
    </location>
</feature>
<proteinExistence type="inferred from homology"/>